<evidence type="ECO:0000255" key="1">
    <source>
        <dbReference type="HAMAP-Rule" id="MF_00012"/>
    </source>
</evidence>
<proteinExistence type="inferred from homology"/>
<gene>
    <name evidence="1" type="primary">ilvD</name>
    <name type="ordered locus">SP_2126</name>
</gene>
<reference key="1">
    <citation type="journal article" date="2001" name="Science">
        <title>Complete genome sequence of a virulent isolate of Streptococcus pneumoniae.</title>
        <authorList>
            <person name="Tettelin H."/>
            <person name="Nelson K.E."/>
            <person name="Paulsen I.T."/>
            <person name="Eisen J.A."/>
            <person name="Read T.D."/>
            <person name="Peterson S.N."/>
            <person name="Heidelberg J.F."/>
            <person name="DeBoy R.T."/>
            <person name="Haft D.H."/>
            <person name="Dodson R.J."/>
            <person name="Durkin A.S."/>
            <person name="Gwinn M.L."/>
            <person name="Kolonay J.F."/>
            <person name="Nelson W.C."/>
            <person name="Peterson J.D."/>
            <person name="Umayam L.A."/>
            <person name="White O."/>
            <person name="Salzberg S.L."/>
            <person name="Lewis M.R."/>
            <person name="Radune D."/>
            <person name="Holtzapple E.K."/>
            <person name="Khouri H.M."/>
            <person name="Wolf A.M."/>
            <person name="Utterback T.R."/>
            <person name="Hansen C.L."/>
            <person name="McDonald L.A."/>
            <person name="Feldblyum T.V."/>
            <person name="Angiuoli S.V."/>
            <person name="Dickinson T."/>
            <person name="Hickey E.K."/>
            <person name="Holt I.E."/>
            <person name="Loftus B.J."/>
            <person name="Yang F."/>
            <person name="Smith H.O."/>
            <person name="Venter J.C."/>
            <person name="Dougherty B.A."/>
            <person name="Morrison D.A."/>
            <person name="Hollingshead S.K."/>
            <person name="Fraser C.M."/>
        </authorList>
    </citation>
    <scope>NUCLEOTIDE SEQUENCE [LARGE SCALE GENOMIC DNA]</scope>
    <source>
        <strain>ATCC BAA-334 / TIGR4</strain>
    </source>
</reference>
<feature type="chain" id="PRO_0000103516" description="Dihydroxy-acid dehydratase">
    <location>
        <begin position="1"/>
        <end position="567"/>
    </location>
</feature>
<feature type="active site" description="Proton acceptor" evidence="1">
    <location>
        <position position="474"/>
    </location>
</feature>
<feature type="binding site" evidence="1">
    <location>
        <position position="52"/>
    </location>
    <ligand>
        <name>[2Fe-2S] cluster</name>
        <dbReference type="ChEBI" id="CHEBI:190135"/>
    </ligand>
</feature>
<feature type="binding site" evidence="1">
    <location>
        <position position="84"/>
    </location>
    <ligand>
        <name>Mg(2+)</name>
        <dbReference type="ChEBI" id="CHEBI:18420"/>
    </ligand>
</feature>
<feature type="binding site" evidence="1">
    <location>
        <position position="125"/>
    </location>
    <ligand>
        <name>[2Fe-2S] cluster</name>
        <dbReference type="ChEBI" id="CHEBI:190135"/>
    </ligand>
</feature>
<feature type="binding site" evidence="1">
    <location>
        <position position="126"/>
    </location>
    <ligand>
        <name>Mg(2+)</name>
        <dbReference type="ChEBI" id="CHEBI:18420"/>
    </ligand>
</feature>
<feature type="binding site" description="via carbamate group" evidence="1">
    <location>
        <position position="127"/>
    </location>
    <ligand>
        <name>Mg(2+)</name>
        <dbReference type="ChEBI" id="CHEBI:18420"/>
    </ligand>
</feature>
<feature type="binding site" evidence="1">
    <location>
        <position position="197"/>
    </location>
    <ligand>
        <name>[2Fe-2S] cluster</name>
        <dbReference type="ChEBI" id="CHEBI:190135"/>
    </ligand>
</feature>
<feature type="binding site" evidence="1">
    <location>
        <position position="448"/>
    </location>
    <ligand>
        <name>Mg(2+)</name>
        <dbReference type="ChEBI" id="CHEBI:18420"/>
    </ligand>
</feature>
<feature type="modified residue" description="N6-carboxylysine" evidence="1">
    <location>
        <position position="127"/>
    </location>
</feature>
<organism>
    <name type="scientific">Streptococcus pneumoniae serotype 4 (strain ATCC BAA-334 / TIGR4)</name>
    <dbReference type="NCBI Taxonomy" id="170187"/>
    <lineage>
        <taxon>Bacteria</taxon>
        <taxon>Bacillati</taxon>
        <taxon>Bacillota</taxon>
        <taxon>Bacilli</taxon>
        <taxon>Lactobacillales</taxon>
        <taxon>Streptococcaceae</taxon>
        <taxon>Streptococcus</taxon>
    </lineage>
</organism>
<protein>
    <recommendedName>
        <fullName evidence="1">Dihydroxy-acid dehydratase</fullName>
        <shortName evidence="1">DAD</shortName>
        <ecNumber evidence="1">4.2.1.9</ecNumber>
    </recommendedName>
</protein>
<keyword id="KW-0001">2Fe-2S</keyword>
<keyword id="KW-0028">Amino-acid biosynthesis</keyword>
<keyword id="KW-0100">Branched-chain amino acid biosynthesis</keyword>
<keyword id="KW-0408">Iron</keyword>
<keyword id="KW-0411">Iron-sulfur</keyword>
<keyword id="KW-0456">Lyase</keyword>
<keyword id="KW-0460">Magnesium</keyword>
<keyword id="KW-0479">Metal-binding</keyword>
<keyword id="KW-1185">Reference proteome</keyword>
<dbReference type="EC" id="4.2.1.9" evidence="1"/>
<dbReference type="EMBL" id="AE005672">
    <property type="protein sequence ID" value="AAK76184.1"/>
    <property type="molecule type" value="Genomic_DNA"/>
</dbReference>
<dbReference type="PIR" id="G95248">
    <property type="entry name" value="G95248"/>
</dbReference>
<dbReference type="RefSeq" id="WP_000137358.1">
    <property type="nucleotide sequence ID" value="NZ_CP155539.1"/>
</dbReference>
<dbReference type="SMR" id="P65159"/>
<dbReference type="PaxDb" id="170187-SP_2126"/>
<dbReference type="EnsemblBacteria" id="AAK76184">
    <property type="protein sequence ID" value="AAK76184"/>
    <property type="gene ID" value="SP_2126"/>
</dbReference>
<dbReference type="KEGG" id="spn:SP_2126"/>
<dbReference type="eggNOG" id="COG0129">
    <property type="taxonomic scope" value="Bacteria"/>
</dbReference>
<dbReference type="PhylomeDB" id="P65159"/>
<dbReference type="BioCyc" id="SPNE170187:G1FZB-2218-MONOMER"/>
<dbReference type="UniPathway" id="UPA00047">
    <property type="reaction ID" value="UER00057"/>
</dbReference>
<dbReference type="UniPathway" id="UPA00049">
    <property type="reaction ID" value="UER00061"/>
</dbReference>
<dbReference type="Proteomes" id="UP000000585">
    <property type="component" value="Chromosome"/>
</dbReference>
<dbReference type="GO" id="GO:0051537">
    <property type="term" value="F:2 iron, 2 sulfur cluster binding"/>
    <property type="evidence" value="ECO:0007669"/>
    <property type="project" value="UniProtKB-UniRule"/>
</dbReference>
<dbReference type="GO" id="GO:0004160">
    <property type="term" value="F:dihydroxy-acid dehydratase activity"/>
    <property type="evidence" value="ECO:0007669"/>
    <property type="project" value="UniProtKB-UniRule"/>
</dbReference>
<dbReference type="GO" id="GO:0000287">
    <property type="term" value="F:magnesium ion binding"/>
    <property type="evidence" value="ECO:0007669"/>
    <property type="project" value="UniProtKB-UniRule"/>
</dbReference>
<dbReference type="GO" id="GO:0009097">
    <property type="term" value="P:isoleucine biosynthetic process"/>
    <property type="evidence" value="ECO:0007669"/>
    <property type="project" value="UniProtKB-UniRule"/>
</dbReference>
<dbReference type="GO" id="GO:0009099">
    <property type="term" value="P:L-valine biosynthetic process"/>
    <property type="evidence" value="ECO:0007669"/>
    <property type="project" value="UniProtKB-UniRule"/>
</dbReference>
<dbReference type="FunFam" id="3.50.30.80:FF:000001">
    <property type="entry name" value="Dihydroxy-acid dehydratase"/>
    <property type="match status" value="1"/>
</dbReference>
<dbReference type="Gene3D" id="3.50.30.80">
    <property type="entry name" value="IlvD/EDD C-terminal domain-like"/>
    <property type="match status" value="1"/>
</dbReference>
<dbReference type="HAMAP" id="MF_00012">
    <property type="entry name" value="IlvD"/>
    <property type="match status" value="1"/>
</dbReference>
<dbReference type="InterPro" id="IPR050165">
    <property type="entry name" value="DHAD_IlvD/Edd"/>
</dbReference>
<dbReference type="InterPro" id="IPR042096">
    <property type="entry name" value="Dihydro-acid_dehy_C"/>
</dbReference>
<dbReference type="InterPro" id="IPR004404">
    <property type="entry name" value="DihydroxyA_deHydtase"/>
</dbReference>
<dbReference type="InterPro" id="IPR020558">
    <property type="entry name" value="DiOHA_6PGluconate_deHydtase_CS"/>
</dbReference>
<dbReference type="InterPro" id="IPR056740">
    <property type="entry name" value="ILV_EDD_C"/>
</dbReference>
<dbReference type="InterPro" id="IPR000581">
    <property type="entry name" value="ILV_EDD_N"/>
</dbReference>
<dbReference type="InterPro" id="IPR037237">
    <property type="entry name" value="IlvD/EDD_N"/>
</dbReference>
<dbReference type="NCBIfam" id="TIGR00110">
    <property type="entry name" value="ilvD"/>
    <property type="match status" value="1"/>
</dbReference>
<dbReference type="NCBIfam" id="NF002068">
    <property type="entry name" value="PRK00911.1"/>
    <property type="match status" value="1"/>
</dbReference>
<dbReference type="PANTHER" id="PTHR21000">
    <property type="entry name" value="DIHYDROXY-ACID DEHYDRATASE DAD"/>
    <property type="match status" value="1"/>
</dbReference>
<dbReference type="PANTHER" id="PTHR21000:SF5">
    <property type="entry name" value="DIHYDROXY-ACID DEHYDRATASE, MITOCHONDRIAL"/>
    <property type="match status" value="1"/>
</dbReference>
<dbReference type="Pfam" id="PF24877">
    <property type="entry name" value="ILV_EDD_C"/>
    <property type="match status" value="1"/>
</dbReference>
<dbReference type="Pfam" id="PF00920">
    <property type="entry name" value="ILVD_EDD_N"/>
    <property type="match status" value="1"/>
</dbReference>
<dbReference type="SUPFAM" id="SSF143975">
    <property type="entry name" value="IlvD/EDD N-terminal domain-like"/>
    <property type="match status" value="1"/>
</dbReference>
<dbReference type="SUPFAM" id="SSF52016">
    <property type="entry name" value="LeuD/IlvD-like"/>
    <property type="match status" value="1"/>
</dbReference>
<dbReference type="PROSITE" id="PS00886">
    <property type="entry name" value="ILVD_EDD_1"/>
    <property type="match status" value="1"/>
</dbReference>
<dbReference type="PROSITE" id="PS00887">
    <property type="entry name" value="ILVD_EDD_2"/>
    <property type="match status" value="1"/>
</dbReference>
<sequence length="567" mass="59859">MTELDKRHRSSIYDSMVKSPNRAMLRATGMTDKDFETSIVGVISTWAENTPCNIHLHDFGKLAKEGVKSAGAWPVQFGTITVADGIAMGTPGMRFSLTSRDIIADSIEAAMSGHNVDAFVAIGGCDKNMPGSMIAIANMDIPAIFAYGGTIAPGNLDGKDIDLVSVFEGIGKWNHGDMTAEDVKRLECNACPGPGGCGGMYTANTMATAIEVLGMSLPGSSSHPAESADKKEDIEAAGRAVVKMLELGLKPSDILTREAFEDAITVTMALGGSTNATLHLLAIAHAANVDLSLEDFNTIQERVPHLADLKPSGQYVFQDLYEVGGVPAVMKYLLANGFLHGDRITCTGKTVAENLADFADLTPGQKVIMPLENPKRADGPLIILNGNLAPDGAVAKVSGVKVRRHVGPAKVFDSEEDAIQAVLTDEIVDGDVVVVRFVGPKGGPGMPEMLSLSSMIVGKGQGDKVALLTDGRFSGGTYGLVVGHIAPEAQDGGPIAYLRTGDIVTVDQDTKEISMAVSEEELEKRKAETTLPPLYSRGVLGKYAHIVSSASRGAVTDFWNMDKSGKK</sequence>
<comment type="function">
    <text evidence="1">Functions in the biosynthesis of branched-chain amino acids. Catalyzes the dehydration of (2R,3R)-2,3-dihydroxy-3-methylpentanoate (2,3-dihydroxy-3-methylvalerate) into 2-oxo-3-methylpentanoate (2-oxo-3-methylvalerate) and of (2R)-2,3-dihydroxy-3-methylbutanoate (2,3-dihydroxyisovalerate) into 2-oxo-3-methylbutanoate (2-oxoisovalerate), the penultimate precursor to L-isoleucine and L-valine, respectively.</text>
</comment>
<comment type="catalytic activity">
    <reaction evidence="1">
        <text>(2R)-2,3-dihydroxy-3-methylbutanoate = 3-methyl-2-oxobutanoate + H2O</text>
        <dbReference type="Rhea" id="RHEA:24809"/>
        <dbReference type="ChEBI" id="CHEBI:11851"/>
        <dbReference type="ChEBI" id="CHEBI:15377"/>
        <dbReference type="ChEBI" id="CHEBI:49072"/>
        <dbReference type="EC" id="4.2.1.9"/>
    </reaction>
    <physiologicalReaction direction="left-to-right" evidence="1">
        <dbReference type="Rhea" id="RHEA:24810"/>
    </physiologicalReaction>
</comment>
<comment type="catalytic activity">
    <reaction evidence="1">
        <text>(2R,3R)-2,3-dihydroxy-3-methylpentanoate = (S)-3-methyl-2-oxopentanoate + H2O</text>
        <dbReference type="Rhea" id="RHEA:27694"/>
        <dbReference type="ChEBI" id="CHEBI:15377"/>
        <dbReference type="ChEBI" id="CHEBI:35146"/>
        <dbReference type="ChEBI" id="CHEBI:49258"/>
        <dbReference type="EC" id="4.2.1.9"/>
    </reaction>
    <physiologicalReaction direction="left-to-right" evidence="1">
        <dbReference type="Rhea" id="RHEA:27695"/>
    </physiologicalReaction>
</comment>
<comment type="cofactor">
    <cofactor evidence="1">
        <name>[2Fe-2S] cluster</name>
        <dbReference type="ChEBI" id="CHEBI:190135"/>
    </cofactor>
    <text evidence="1">Binds 1 [2Fe-2S] cluster per subunit. This cluster acts as a Lewis acid cofactor.</text>
</comment>
<comment type="cofactor">
    <cofactor evidence="1">
        <name>Mg(2+)</name>
        <dbReference type="ChEBI" id="CHEBI:18420"/>
    </cofactor>
</comment>
<comment type="pathway">
    <text evidence="1">Amino-acid biosynthesis; L-isoleucine biosynthesis; L-isoleucine from 2-oxobutanoate: step 3/4.</text>
</comment>
<comment type="pathway">
    <text evidence="1">Amino-acid biosynthesis; L-valine biosynthesis; L-valine from pyruvate: step 3/4.</text>
</comment>
<comment type="subunit">
    <text evidence="1">Homodimer.</text>
</comment>
<comment type="similarity">
    <text evidence="1">Belongs to the IlvD/Edd family.</text>
</comment>
<name>ILVD_STRPN</name>
<accession>P65159</accession>
<accession>Q97NC5</accession>